<keyword id="KW-1003">Cell membrane</keyword>
<keyword id="KW-1015">Disulfide bond</keyword>
<keyword id="KW-0967">Endosome</keyword>
<keyword id="KW-0297">G-protein coupled receptor</keyword>
<keyword id="KW-0325">Glycoprotein</keyword>
<keyword id="KW-0333">Golgi apparatus</keyword>
<keyword id="KW-0379">Hydroxylation</keyword>
<keyword id="KW-0449">Lipoprotein</keyword>
<keyword id="KW-0472">Membrane</keyword>
<keyword id="KW-0564">Palmitate</keyword>
<keyword id="KW-0597">Phosphoprotein</keyword>
<keyword id="KW-0675">Receptor</keyword>
<keyword id="KW-1185">Reference proteome</keyword>
<keyword id="KW-0807">Transducer</keyword>
<keyword id="KW-0812">Transmembrane</keyword>
<keyword id="KW-1133">Transmembrane helix</keyword>
<keyword id="KW-0832">Ubl conjugation</keyword>
<accession>P10608</accession>
<accession>Q6LCR3</accession>
<feature type="chain" id="PRO_0000069136" description="Beta-2 adrenergic receptor">
    <location>
        <begin position="1"/>
        <end position="418"/>
    </location>
</feature>
<feature type="topological domain" description="Extracellular" evidence="1">
    <location>
        <begin position="1"/>
        <end position="34"/>
    </location>
</feature>
<feature type="transmembrane region" description="Helical; Name=1" evidence="1">
    <location>
        <begin position="35"/>
        <end position="58"/>
    </location>
</feature>
<feature type="topological domain" description="Cytoplasmic" evidence="1">
    <location>
        <begin position="59"/>
        <end position="71"/>
    </location>
</feature>
<feature type="transmembrane region" description="Helical; Name=2" evidence="1">
    <location>
        <begin position="72"/>
        <end position="95"/>
    </location>
</feature>
<feature type="topological domain" description="Extracellular" evidence="1">
    <location>
        <begin position="96"/>
        <end position="106"/>
    </location>
</feature>
<feature type="transmembrane region" description="Helical; Name=3" evidence="1">
    <location>
        <begin position="107"/>
        <end position="129"/>
    </location>
</feature>
<feature type="topological domain" description="Cytoplasmic" evidence="1">
    <location>
        <begin position="130"/>
        <end position="150"/>
    </location>
</feature>
<feature type="transmembrane region" description="Helical; Name=4" evidence="1">
    <location>
        <begin position="151"/>
        <end position="174"/>
    </location>
</feature>
<feature type="topological domain" description="Extracellular" evidence="1">
    <location>
        <begin position="175"/>
        <end position="196"/>
    </location>
</feature>
<feature type="transmembrane region" description="Helical; Name=5" evidence="1">
    <location>
        <begin position="197"/>
        <end position="220"/>
    </location>
</feature>
<feature type="topological domain" description="Cytoplasmic" evidence="1">
    <location>
        <begin position="221"/>
        <end position="274"/>
    </location>
</feature>
<feature type="transmembrane region" description="Helical; Name=6" evidence="1">
    <location>
        <begin position="275"/>
        <end position="298"/>
    </location>
</feature>
<feature type="topological domain" description="Extracellular" evidence="1">
    <location>
        <begin position="299"/>
        <end position="305"/>
    </location>
</feature>
<feature type="transmembrane region" description="Helical; Name=7" evidence="1">
    <location>
        <begin position="306"/>
        <end position="329"/>
    </location>
</feature>
<feature type="topological domain" description="Cytoplasmic" evidence="1">
    <location>
        <begin position="330"/>
        <end position="418"/>
    </location>
</feature>
<feature type="region of interest" description="Disordered" evidence="5">
    <location>
        <begin position="1"/>
        <end position="23"/>
    </location>
</feature>
<feature type="short sequence motif" description="PDZ-binding">
    <location>
        <begin position="415"/>
        <end position="418"/>
    </location>
</feature>
<feature type="modified residue" description="Phosphotyrosine" evidence="2">
    <location>
        <position position="141"/>
    </location>
</feature>
<feature type="modified residue" description="Phosphoserine" evidence="2">
    <location>
        <position position="246"/>
    </location>
</feature>
<feature type="modified residue" description="Phosphoserine; by PKA" evidence="3">
    <location>
        <position position="261"/>
    </location>
</feature>
<feature type="modified residue" description="Phosphoserine; by PKA" evidence="3">
    <location>
        <position position="262"/>
    </location>
</feature>
<feature type="modified residue" description="Phosphoserine; by PKA" evidence="2">
    <location>
        <position position="345"/>
    </location>
</feature>
<feature type="modified residue" description="Phosphoserine; by PKA" evidence="2">
    <location>
        <position position="346"/>
    </location>
</feature>
<feature type="modified residue" description="Phosphoserine; by BARK" evidence="7">
    <location>
        <position position="355"/>
    </location>
</feature>
<feature type="modified residue" description="Phosphoserine; by BARK" evidence="7">
    <location>
        <position position="356"/>
    </location>
</feature>
<feature type="modified residue" description="4-hydroxyproline" evidence="1">
    <location>
        <position position="387"/>
    </location>
</feature>
<feature type="modified residue" description="4-hydroxyproline" evidence="1">
    <location>
        <position position="400"/>
    </location>
</feature>
<feature type="lipid moiety-binding region" description="S-palmitoyl cysteine" evidence="2">
    <location>
        <position position="265"/>
    </location>
</feature>
<feature type="lipid moiety-binding region" description="S-palmitoyl cysteine" evidence="2">
    <location>
        <position position="341"/>
    </location>
</feature>
<feature type="glycosylation site" description="N-linked (GlcNAc...) asparagine" evidence="7">
    <location>
        <position position="6"/>
    </location>
</feature>
<feature type="glycosylation site" description="N-linked (GlcNAc...) asparagine" evidence="7">
    <location>
        <position position="15"/>
    </location>
</feature>
<feature type="disulfide bond" evidence="4">
    <location>
        <begin position="106"/>
        <end position="191"/>
    </location>
</feature>
<feature type="disulfide bond" evidence="4">
    <location>
        <begin position="184"/>
        <end position="190"/>
    </location>
</feature>
<feature type="sequence conflict" description="In Ref. 2; AAA89068." evidence="7" ref="2">
    <original>S</original>
    <variation>F</variation>
    <location>
        <position position="262"/>
    </location>
</feature>
<feature type="sequence conflict" description="In Ref. 2; AAA89068." evidence="7" ref="2">
    <original>I</original>
    <variation>Y</variation>
    <location>
        <position position="334"/>
    </location>
</feature>
<dbReference type="EMBL" id="J03024">
    <property type="protein sequence ID" value="AAA40675.1"/>
    <property type="molecule type" value="mRNA"/>
</dbReference>
<dbReference type="EMBL" id="X17607">
    <property type="protein sequence ID" value="CAA35609.1"/>
    <property type="molecule type" value="Genomic_DNA"/>
</dbReference>
<dbReference type="EMBL" id="L39264">
    <property type="protein sequence ID" value="AAA89068.1"/>
    <property type="molecule type" value="Genomic_DNA"/>
</dbReference>
<dbReference type="EMBL" id="U35448">
    <property type="protein sequence ID" value="AAC52449.1"/>
    <property type="molecule type" value="Genomic_DNA"/>
</dbReference>
<dbReference type="PIR" id="S10855">
    <property type="entry name" value="S10855"/>
</dbReference>
<dbReference type="SMR" id="P10608"/>
<dbReference type="CORUM" id="P10608"/>
<dbReference type="FunCoup" id="P10608">
    <property type="interactions" value="479"/>
</dbReference>
<dbReference type="IntAct" id="P10608">
    <property type="interactions" value="5"/>
</dbReference>
<dbReference type="MINT" id="P10608"/>
<dbReference type="STRING" id="10116.ENSRNOP00000026098"/>
<dbReference type="BindingDB" id="P10608"/>
<dbReference type="ChEMBL" id="CHEMBL3754"/>
<dbReference type="DrugCentral" id="P10608"/>
<dbReference type="GuidetoPHARMACOLOGY" id="29"/>
<dbReference type="GlyCosmos" id="P10608">
    <property type="glycosylation" value="2 sites, No reported glycans"/>
</dbReference>
<dbReference type="GlyGen" id="P10608">
    <property type="glycosylation" value="2 sites"/>
</dbReference>
<dbReference type="iPTMnet" id="P10608"/>
<dbReference type="PhosphoSitePlus" id="P10608"/>
<dbReference type="PaxDb" id="10116-ENSRNOP00000026098"/>
<dbReference type="UCSC" id="RGD:2060">
    <property type="organism name" value="rat"/>
</dbReference>
<dbReference type="AGR" id="RGD:2060"/>
<dbReference type="RGD" id="2060">
    <property type="gene designation" value="Adrb2"/>
</dbReference>
<dbReference type="eggNOG" id="KOG3656">
    <property type="taxonomic scope" value="Eukaryota"/>
</dbReference>
<dbReference type="InParanoid" id="P10608"/>
<dbReference type="PhylomeDB" id="P10608"/>
<dbReference type="Reactome" id="R-RNO-390696">
    <property type="pathway name" value="Adrenoceptors"/>
</dbReference>
<dbReference type="Reactome" id="R-RNO-418555">
    <property type="pathway name" value="G alpha (s) signalling events"/>
</dbReference>
<dbReference type="Reactome" id="R-RNO-5689880">
    <property type="pathway name" value="Ub-specific processing proteases"/>
</dbReference>
<dbReference type="Reactome" id="R-RNO-8856825">
    <property type="pathway name" value="Cargo recognition for clathrin-mediated endocytosis"/>
</dbReference>
<dbReference type="Reactome" id="R-RNO-8856828">
    <property type="pathway name" value="Clathrin-mediated endocytosis"/>
</dbReference>
<dbReference type="PRO" id="PR:P10608"/>
<dbReference type="Proteomes" id="UP000002494">
    <property type="component" value="Unplaced"/>
</dbReference>
<dbReference type="GO" id="GO:0016324">
    <property type="term" value="C:apical plasma membrane"/>
    <property type="evidence" value="ECO:0000266"/>
    <property type="project" value="RGD"/>
</dbReference>
<dbReference type="GO" id="GO:0030424">
    <property type="term" value="C:axon"/>
    <property type="evidence" value="ECO:0000314"/>
    <property type="project" value="RGD"/>
</dbReference>
<dbReference type="GO" id="GO:0005901">
    <property type="term" value="C:caveola"/>
    <property type="evidence" value="ECO:0000314"/>
    <property type="project" value="RGD"/>
</dbReference>
<dbReference type="GO" id="GO:0030425">
    <property type="term" value="C:dendrite"/>
    <property type="evidence" value="ECO:0000314"/>
    <property type="project" value="RGD"/>
</dbReference>
<dbReference type="GO" id="GO:0043197">
    <property type="term" value="C:dendritic spine"/>
    <property type="evidence" value="ECO:0000314"/>
    <property type="project" value="RGD"/>
</dbReference>
<dbReference type="GO" id="GO:0005769">
    <property type="term" value="C:early endosome"/>
    <property type="evidence" value="ECO:0007669"/>
    <property type="project" value="UniProtKB-SubCell"/>
</dbReference>
<dbReference type="GO" id="GO:0005768">
    <property type="term" value="C:endosome"/>
    <property type="evidence" value="ECO:0000314"/>
    <property type="project" value="RGD"/>
</dbReference>
<dbReference type="GO" id="GO:0098978">
    <property type="term" value="C:glutamatergic synapse"/>
    <property type="evidence" value="ECO:0000314"/>
    <property type="project" value="SynGO"/>
</dbReference>
<dbReference type="GO" id="GO:0005794">
    <property type="term" value="C:Golgi apparatus"/>
    <property type="evidence" value="ECO:0000266"/>
    <property type="project" value="RGD"/>
</dbReference>
<dbReference type="GO" id="GO:0016020">
    <property type="term" value="C:membrane"/>
    <property type="evidence" value="ECO:0000266"/>
    <property type="project" value="RGD"/>
</dbReference>
<dbReference type="GO" id="GO:0032809">
    <property type="term" value="C:neuronal cell body membrane"/>
    <property type="evidence" value="ECO:0000314"/>
    <property type="project" value="RGD"/>
</dbReference>
<dbReference type="GO" id="GO:0098992">
    <property type="term" value="C:neuronal dense core vesicle"/>
    <property type="evidence" value="ECO:0000266"/>
    <property type="project" value="RGD"/>
</dbReference>
<dbReference type="GO" id="GO:0005634">
    <property type="term" value="C:nucleus"/>
    <property type="evidence" value="ECO:0000266"/>
    <property type="project" value="RGD"/>
</dbReference>
<dbReference type="GO" id="GO:0005886">
    <property type="term" value="C:plasma membrane"/>
    <property type="evidence" value="ECO:0000266"/>
    <property type="project" value="RGD"/>
</dbReference>
<dbReference type="GO" id="GO:0045211">
    <property type="term" value="C:postsynaptic membrane"/>
    <property type="evidence" value="ECO:0000314"/>
    <property type="project" value="SynGO"/>
</dbReference>
<dbReference type="GO" id="GO:0098793">
    <property type="term" value="C:presynapse"/>
    <property type="evidence" value="ECO:0007669"/>
    <property type="project" value="GOC"/>
</dbReference>
<dbReference type="GO" id="GO:0043235">
    <property type="term" value="C:receptor complex"/>
    <property type="evidence" value="ECO:0000266"/>
    <property type="project" value="RGD"/>
</dbReference>
<dbReference type="GO" id="GO:0042383">
    <property type="term" value="C:sarcolemma"/>
    <property type="evidence" value="ECO:0000314"/>
    <property type="project" value="RGD"/>
</dbReference>
<dbReference type="GO" id="GO:0098685">
    <property type="term" value="C:Schaffer collateral - CA1 synapse"/>
    <property type="evidence" value="ECO:0000314"/>
    <property type="project" value="SynGO"/>
</dbReference>
<dbReference type="GO" id="GO:0008179">
    <property type="term" value="F:adenylate cyclase binding"/>
    <property type="evidence" value="ECO:0000266"/>
    <property type="project" value="RGD"/>
</dbReference>
<dbReference type="GO" id="GO:0001540">
    <property type="term" value="F:amyloid-beta binding"/>
    <property type="evidence" value="ECO:0000266"/>
    <property type="project" value="RGD"/>
</dbReference>
<dbReference type="GO" id="GO:0031713">
    <property type="term" value="F:B2 bradykinin receptor binding"/>
    <property type="evidence" value="ECO:0000353"/>
    <property type="project" value="RGD"/>
</dbReference>
<dbReference type="GO" id="GO:0004941">
    <property type="term" value="F:beta2-adrenergic receptor activity"/>
    <property type="evidence" value="ECO:0000314"/>
    <property type="project" value="RGD"/>
</dbReference>
<dbReference type="GO" id="GO:0019899">
    <property type="term" value="F:enzyme binding"/>
    <property type="evidence" value="ECO:0000266"/>
    <property type="project" value="RGD"/>
</dbReference>
<dbReference type="GO" id="GO:0051379">
    <property type="term" value="F:epinephrine binding"/>
    <property type="evidence" value="ECO:0000304"/>
    <property type="project" value="RGD"/>
</dbReference>
<dbReference type="GO" id="GO:0001965">
    <property type="term" value="F:G-protein alpha-subunit binding"/>
    <property type="evidence" value="ECO:0000353"/>
    <property type="project" value="RGD"/>
</dbReference>
<dbReference type="GO" id="GO:0042802">
    <property type="term" value="F:identical protein binding"/>
    <property type="evidence" value="ECO:0000266"/>
    <property type="project" value="RGD"/>
</dbReference>
<dbReference type="GO" id="GO:0035255">
    <property type="term" value="F:ionotropic glutamate receptor binding"/>
    <property type="evidence" value="ECO:0000353"/>
    <property type="project" value="ARUK-UCL"/>
</dbReference>
<dbReference type="GO" id="GO:0051380">
    <property type="term" value="F:norepinephrine binding"/>
    <property type="evidence" value="ECO:0000266"/>
    <property type="project" value="RGD"/>
</dbReference>
<dbReference type="GO" id="GO:0030165">
    <property type="term" value="F:PDZ domain binding"/>
    <property type="evidence" value="ECO:0000304"/>
    <property type="project" value="RGD"/>
</dbReference>
<dbReference type="GO" id="GO:0015459">
    <property type="term" value="F:potassium channel regulator activity"/>
    <property type="evidence" value="ECO:0000266"/>
    <property type="project" value="RGD"/>
</dbReference>
<dbReference type="GO" id="GO:0042803">
    <property type="term" value="F:protein homodimerization activity"/>
    <property type="evidence" value="ECO:0000266"/>
    <property type="project" value="RGD"/>
</dbReference>
<dbReference type="GO" id="GO:0051721">
    <property type="term" value="F:protein phosphatase 2A binding"/>
    <property type="evidence" value="ECO:0000353"/>
    <property type="project" value="ARUK-UCL"/>
</dbReference>
<dbReference type="GO" id="GO:0044877">
    <property type="term" value="F:protein-containing complex binding"/>
    <property type="evidence" value="ECO:0000353"/>
    <property type="project" value="RGD"/>
</dbReference>
<dbReference type="GO" id="GO:0090722">
    <property type="term" value="F:receptor-receptor interaction"/>
    <property type="evidence" value="ECO:0000353"/>
    <property type="project" value="ARUK-UCL"/>
</dbReference>
<dbReference type="GO" id="GO:0071880">
    <property type="term" value="P:adenylate cyclase-activating adrenergic receptor signaling pathway"/>
    <property type="evidence" value="ECO:0000266"/>
    <property type="project" value="RGD"/>
</dbReference>
<dbReference type="GO" id="GO:0007189">
    <property type="term" value="P:adenylate cyclase-activating G protein-coupled receptor signaling pathway"/>
    <property type="evidence" value="ECO:0000314"/>
    <property type="project" value="RGD"/>
</dbReference>
<dbReference type="GO" id="GO:0071875">
    <property type="term" value="P:adrenergic receptor signaling pathway"/>
    <property type="evidence" value="ECO:0000266"/>
    <property type="project" value="RGD"/>
</dbReference>
<dbReference type="GO" id="GO:0098990">
    <property type="term" value="P:AMPA selective glutamate receptor signaling pathway"/>
    <property type="evidence" value="ECO:0000266"/>
    <property type="project" value="RGD"/>
</dbReference>
<dbReference type="GO" id="GO:0008306">
    <property type="term" value="P:associative learning"/>
    <property type="evidence" value="ECO:0000314"/>
    <property type="project" value="RGD"/>
</dbReference>
<dbReference type="GO" id="GO:0045453">
    <property type="term" value="P:bone resorption"/>
    <property type="evidence" value="ECO:0000266"/>
    <property type="project" value="RGD"/>
</dbReference>
<dbReference type="GO" id="GO:0050873">
    <property type="term" value="P:brown fat cell differentiation"/>
    <property type="evidence" value="ECO:0000266"/>
    <property type="project" value="RGD"/>
</dbReference>
<dbReference type="GO" id="GO:1904646">
    <property type="term" value="P:cellular response to amyloid-beta"/>
    <property type="evidence" value="ECO:0000266"/>
    <property type="project" value="RGD"/>
</dbReference>
<dbReference type="GO" id="GO:0071456">
    <property type="term" value="P:cellular response to hypoxia"/>
    <property type="evidence" value="ECO:0000314"/>
    <property type="project" value="RGD"/>
</dbReference>
<dbReference type="GO" id="GO:0002086">
    <property type="term" value="P:diaphragm contraction"/>
    <property type="evidence" value="ECO:0000314"/>
    <property type="project" value="RGD"/>
</dbReference>
<dbReference type="GO" id="GO:0002024">
    <property type="term" value="P:diet induced thermogenesis"/>
    <property type="evidence" value="ECO:0000266"/>
    <property type="project" value="RGD"/>
</dbReference>
<dbReference type="GO" id="GO:0044849">
    <property type="term" value="P:estrous cycle"/>
    <property type="evidence" value="ECO:0000270"/>
    <property type="project" value="RGD"/>
</dbReference>
<dbReference type="GO" id="GO:0060079">
    <property type="term" value="P:excitatory postsynaptic potential"/>
    <property type="evidence" value="ECO:0000315"/>
    <property type="project" value="RGD"/>
</dbReference>
<dbReference type="GO" id="GO:0007565">
    <property type="term" value="P:female pregnancy"/>
    <property type="evidence" value="ECO:0000270"/>
    <property type="project" value="RGD"/>
</dbReference>
<dbReference type="GO" id="GO:0007186">
    <property type="term" value="P:G protein-coupled receptor signaling pathway"/>
    <property type="evidence" value="ECO:0000314"/>
    <property type="project" value="RGD"/>
</dbReference>
<dbReference type="GO" id="GO:0031649">
    <property type="term" value="P:heat generation"/>
    <property type="evidence" value="ECO:0000266"/>
    <property type="project" value="RGD"/>
</dbReference>
<dbReference type="GO" id="GO:0001889">
    <property type="term" value="P:liver development"/>
    <property type="evidence" value="ECO:0000270"/>
    <property type="project" value="RGD"/>
</dbReference>
<dbReference type="GO" id="GO:0097421">
    <property type="term" value="P:liver regeneration"/>
    <property type="evidence" value="ECO:0000270"/>
    <property type="project" value="RGD"/>
</dbReference>
<dbReference type="GO" id="GO:0016525">
    <property type="term" value="P:negative regulation of angiogenesis"/>
    <property type="evidence" value="ECO:0000315"/>
    <property type="project" value="RGD"/>
</dbReference>
<dbReference type="GO" id="GO:0045744">
    <property type="term" value="P:negative regulation of G protein-coupled receptor signaling pathway"/>
    <property type="evidence" value="ECO:0000266"/>
    <property type="project" value="RGD"/>
</dbReference>
<dbReference type="GO" id="GO:0040015">
    <property type="term" value="P:negative regulation of multicellular organism growth"/>
    <property type="evidence" value="ECO:0000266"/>
    <property type="project" value="RGD"/>
</dbReference>
<dbReference type="GO" id="GO:0030279">
    <property type="term" value="P:negative regulation of ossification"/>
    <property type="evidence" value="ECO:0000315"/>
    <property type="project" value="RGD"/>
</dbReference>
<dbReference type="GO" id="GO:0045986">
    <property type="term" value="P:negative regulation of smooth muscle contraction"/>
    <property type="evidence" value="ECO:0000266"/>
    <property type="project" value="RGD"/>
</dbReference>
<dbReference type="GO" id="GO:0035811">
    <property type="term" value="P:negative regulation of urine volume"/>
    <property type="evidence" value="ECO:0000315"/>
    <property type="project" value="RGD"/>
</dbReference>
<dbReference type="GO" id="GO:0002025">
    <property type="term" value="P:norepinephrine-epinephrine-mediated vasodilation involved in regulation of systemic arterial blood pressure"/>
    <property type="evidence" value="ECO:0000266"/>
    <property type="project" value="RGD"/>
</dbReference>
<dbReference type="GO" id="GO:0043065">
    <property type="term" value="P:positive regulation of apoptotic process"/>
    <property type="evidence" value="ECO:0000315"/>
    <property type="project" value="RGD"/>
</dbReference>
<dbReference type="GO" id="GO:1901098">
    <property type="term" value="P:positive regulation of autophagosome maturation"/>
    <property type="evidence" value="ECO:0000250"/>
    <property type="project" value="GO_Central"/>
</dbReference>
<dbReference type="GO" id="GO:0030501">
    <property type="term" value="P:positive regulation of bone mineralization"/>
    <property type="evidence" value="ECO:0000266"/>
    <property type="project" value="RGD"/>
</dbReference>
<dbReference type="GO" id="GO:1905665">
    <property type="term" value="P:positive regulation of calcium ion import across plasma membrane"/>
    <property type="evidence" value="ECO:0000314"/>
    <property type="project" value="RGD"/>
</dbReference>
<dbReference type="GO" id="GO:0141163">
    <property type="term" value="P:positive regulation of cAMP/PKA signal transduction"/>
    <property type="evidence" value="ECO:0000266"/>
    <property type="project" value="RGD"/>
</dbReference>
<dbReference type="GO" id="GO:0008284">
    <property type="term" value="P:positive regulation of cell population proliferation"/>
    <property type="evidence" value="ECO:0000314"/>
    <property type="project" value="RGD"/>
</dbReference>
<dbReference type="GO" id="GO:0120162">
    <property type="term" value="P:positive regulation of cold-induced thermogenesis"/>
    <property type="evidence" value="ECO:0000250"/>
    <property type="project" value="YuBioLab"/>
</dbReference>
<dbReference type="GO" id="GO:1904504">
    <property type="term" value="P:positive regulation of lipophagy"/>
    <property type="evidence" value="ECO:0000250"/>
    <property type="project" value="GO_Central"/>
</dbReference>
<dbReference type="GO" id="GO:0043410">
    <property type="term" value="P:positive regulation of MAPK cascade"/>
    <property type="evidence" value="ECO:0000266"/>
    <property type="project" value="RGD"/>
</dbReference>
<dbReference type="GO" id="GO:0061885">
    <property type="term" value="P:positive regulation of mini excitatory postsynaptic potential"/>
    <property type="evidence" value="ECO:0000266"/>
    <property type="project" value="RGD"/>
</dbReference>
<dbReference type="GO" id="GO:0043268">
    <property type="term" value="P:positive regulation of potassium ion transport"/>
    <property type="evidence" value="ECO:0000314"/>
    <property type="project" value="RGD"/>
</dbReference>
<dbReference type="GO" id="GO:0048633">
    <property type="term" value="P:positive regulation of skeletal muscle tissue growth"/>
    <property type="evidence" value="ECO:0000315"/>
    <property type="project" value="RGD"/>
</dbReference>
<dbReference type="GO" id="GO:0010765">
    <property type="term" value="P:positive regulation of sodium ion transport"/>
    <property type="evidence" value="ECO:0000314"/>
    <property type="project" value="RGD"/>
</dbReference>
<dbReference type="GO" id="GO:0003059">
    <property type="term" value="P:positive regulation of the force of heart contraction by epinephrine"/>
    <property type="evidence" value="ECO:0000314"/>
    <property type="project" value="RGD"/>
</dbReference>
<dbReference type="GO" id="GO:0045944">
    <property type="term" value="P:positive regulation of transcription by RNA polymerase II"/>
    <property type="evidence" value="ECO:0000266"/>
    <property type="project" value="RGD"/>
</dbReference>
<dbReference type="GO" id="GO:0099171">
    <property type="term" value="P:presynaptic modulation of chemical synaptic transmission"/>
    <property type="evidence" value="ECO:0000314"/>
    <property type="project" value="SynGO"/>
</dbReference>
<dbReference type="GO" id="GO:0006898">
    <property type="term" value="P:receptor-mediated endocytosis"/>
    <property type="evidence" value="ECO:0000266"/>
    <property type="project" value="RGD"/>
</dbReference>
<dbReference type="GO" id="GO:0051924">
    <property type="term" value="P:regulation of calcium ion transport"/>
    <property type="evidence" value="ECO:0000314"/>
    <property type="project" value="RGD"/>
</dbReference>
<dbReference type="GO" id="GO:0002028">
    <property type="term" value="P:regulation of sodium ion transport"/>
    <property type="evidence" value="ECO:0000266"/>
    <property type="project" value="RGD"/>
</dbReference>
<dbReference type="GO" id="GO:0001993">
    <property type="term" value="P:regulation of systemic arterial blood pressure by norepinephrine-epinephrine"/>
    <property type="evidence" value="ECO:0000266"/>
    <property type="project" value="RGD"/>
</dbReference>
<dbReference type="GO" id="GO:0071869">
    <property type="term" value="P:response to catecholamine"/>
    <property type="evidence" value="ECO:0000314"/>
    <property type="project" value="RGD"/>
</dbReference>
<dbReference type="GO" id="GO:0009409">
    <property type="term" value="P:response to cold"/>
    <property type="evidence" value="ECO:0000266"/>
    <property type="project" value="RGD"/>
</dbReference>
<dbReference type="GO" id="GO:0071548">
    <property type="term" value="P:response to dexamethasone"/>
    <property type="evidence" value="ECO:0000270"/>
    <property type="project" value="RGD"/>
</dbReference>
<dbReference type="GO" id="GO:0043627">
    <property type="term" value="P:response to estrogen"/>
    <property type="evidence" value="ECO:0000270"/>
    <property type="project" value="RGD"/>
</dbReference>
<dbReference type="GO" id="GO:0001666">
    <property type="term" value="P:response to hypoxia"/>
    <property type="evidence" value="ECO:0000270"/>
    <property type="project" value="RGD"/>
</dbReference>
<dbReference type="GO" id="GO:0071867">
    <property type="term" value="P:response to monoamine"/>
    <property type="evidence" value="ECO:0000270"/>
    <property type="project" value="RGD"/>
</dbReference>
<dbReference type="GO" id="GO:0032570">
    <property type="term" value="P:response to progesterone"/>
    <property type="evidence" value="ECO:0000270"/>
    <property type="project" value="RGD"/>
</dbReference>
<dbReference type="GO" id="GO:0033574">
    <property type="term" value="P:response to testosterone"/>
    <property type="evidence" value="ECO:0000270"/>
    <property type="project" value="RGD"/>
</dbReference>
<dbReference type="GO" id="GO:0006939">
    <property type="term" value="P:smooth muscle contraction"/>
    <property type="evidence" value="ECO:0000266"/>
    <property type="project" value="RGD"/>
</dbReference>
<dbReference type="GO" id="GO:0035249">
    <property type="term" value="P:synaptic transmission, glutamatergic"/>
    <property type="evidence" value="ECO:0000315"/>
    <property type="project" value="RGD"/>
</dbReference>
<dbReference type="GO" id="GO:0006366">
    <property type="term" value="P:transcription by RNA polymerase II"/>
    <property type="evidence" value="ECO:0000266"/>
    <property type="project" value="RGD"/>
</dbReference>
<dbReference type="GO" id="GO:0042311">
    <property type="term" value="P:vasodilation"/>
    <property type="evidence" value="ECO:0000314"/>
    <property type="project" value="RGD"/>
</dbReference>
<dbReference type="CDD" id="cd15957">
    <property type="entry name" value="7tmA_Beta2_AR"/>
    <property type="match status" value="1"/>
</dbReference>
<dbReference type="FunFam" id="1.20.1070.10:FF:000057">
    <property type="entry name" value="Beta-1 adrenergic receptor"/>
    <property type="match status" value="1"/>
</dbReference>
<dbReference type="Gene3D" id="1.20.1070.10">
    <property type="entry name" value="Rhodopsin 7-helix transmembrane proteins"/>
    <property type="match status" value="1"/>
</dbReference>
<dbReference type="InterPro" id="IPR002233">
    <property type="entry name" value="ADR_fam"/>
</dbReference>
<dbReference type="InterPro" id="IPR000332">
    <property type="entry name" value="ADRB2_rcpt"/>
</dbReference>
<dbReference type="InterPro" id="IPR000276">
    <property type="entry name" value="GPCR_Rhodpsn"/>
</dbReference>
<dbReference type="InterPro" id="IPR017452">
    <property type="entry name" value="GPCR_Rhodpsn_7TM"/>
</dbReference>
<dbReference type="PANTHER" id="PTHR24248">
    <property type="entry name" value="ADRENERGIC RECEPTOR-RELATED G-PROTEIN COUPLED RECEPTOR"/>
    <property type="match status" value="1"/>
</dbReference>
<dbReference type="PANTHER" id="PTHR24248:SF21">
    <property type="entry name" value="BETA-2 ADRENERGIC RECEPTOR"/>
    <property type="match status" value="1"/>
</dbReference>
<dbReference type="Pfam" id="PF00001">
    <property type="entry name" value="7tm_1"/>
    <property type="match status" value="1"/>
</dbReference>
<dbReference type="PRINTS" id="PR01103">
    <property type="entry name" value="ADRENERGICR"/>
</dbReference>
<dbReference type="PRINTS" id="PR00562">
    <property type="entry name" value="ADRENRGCB2AR"/>
</dbReference>
<dbReference type="PRINTS" id="PR00237">
    <property type="entry name" value="GPCRRHODOPSN"/>
</dbReference>
<dbReference type="SMART" id="SM01381">
    <property type="entry name" value="7TM_GPCR_Srsx"/>
    <property type="match status" value="1"/>
</dbReference>
<dbReference type="SUPFAM" id="SSF81321">
    <property type="entry name" value="Family A G protein-coupled receptor-like"/>
    <property type="match status" value="1"/>
</dbReference>
<dbReference type="PROSITE" id="PS00237">
    <property type="entry name" value="G_PROTEIN_RECEP_F1_1"/>
    <property type="match status" value="1"/>
</dbReference>
<dbReference type="PROSITE" id="PS50262">
    <property type="entry name" value="G_PROTEIN_RECEP_F1_2"/>
    <property type="match status" value="1"/>
</dbReference>
<gene>
    <name type="primary">Adrb2</name>
    <name type="synonym">Adrb2r</name>
</gene>
<comment type="function">
    <text evidence="2">Beta-adrenergic receptors mediate the catecholamine-induced activation of adenylate cyclase through the action of G proteins. The beta-2-adrenergic receptor binds epinephrine with an approximately 30-fold greater affinity than it does norepinephrine.</text>
</comment>
<comment type="subunit">
    <text evidence="2">Binds NHERF1 and GPRASP1. Interacts with ARRB1 and ARRB2. Interacts with SRC (By similarity). Interacts with USP20 and USP33 (By similarity). Interacts with VHL; the interaction, which is increased on hydroxylation of ADRB2, ubiquitinates ADRB2 leading to its degradation. Interacts with EGLN3; the interaction hydroxylates ADRB2 facilitating VHL-E3 ligase-mediated ubiquitination. Interacts (via PDZ-binding motif) with SNX27 (via PDZ domain); the interaction is required when endocytosed to prevent degradation in lysosomes and promote recycling to the plasma membrane. Interacts with CNIH4. Interacts with ARRDC3. Interacts with NEDD4 (By similarity). Interacts with MARCHF2 (By similarity).</text>
</comment>
<comment type="interaction">
    <interactant intactId="EBI-7090342">
        <id>P10608</id>
    </interactant>
    <interactant intactId="EBI-375655">
        <id>P31016</id>
        <label>Dlg4</label>
    </interactant>
    <organismsDiffer>false</organismsDiffer>
    <experiments>2</experiments>
</comment>
<comment type="interaction">
    <interactant intactId="EBI-7090342">
        <id>P10608</id>
    </interactant>
    <interactant intactId="EBI-371642">
        <id>P19490</id>
        <label>Gria1</label>
    </interactant>
    <organismsDiffer>false</organismsDiffer>
    <experiments>3</experiments>
</comment>
<comment type="subcellular location">
    <subcellularLocation>
        <location evidence="2">Cell membrane</location>
        <topology evidence="2">Multi-pass membrane protein</topology>
    </subcellularLocation>
    <subcellularLocation>
        <location evidence="2">Early endosome</location>
    </subcellularLocation>
    <subcellularLocation>
        <location evidence="2">Golgi apparatus</location>
    </subcellularLocation>
    <text evidence="2">Colocalizes with VHL at the cell membrane. Activated receptors are internalized into endosomes prior to their degradation in lysosomes. Activated receptors are also detected within the Golgi apparatus.</text>
</comment>
<comment type="PTM">
    <text evidence="1">Palmitoylated; may reduce accessibility of Ser-345 and Ser-346 by anchoring Cys-341 to the plasma membrane. Agonist stimulation promotes depalmitoylation and further allows Ser-345 and Ser-346 phosphorylation (By similarity).</text>
</comment>
<comment type="PTM">
    <text>Phosphorylated by PKA and BARK upon agonist stimulation, which mediates homologous desensitization of the receptor. PKA-mediated phosphorylation seems to facilitate phosphorylation by BARK.</text>
</comment>
<comment type="PTM">
    <text evidence="1">Phosphorylation of Tyr-141 is induced by insulin and leads to supersensitization of the receptor.</text>
</comment>
<comment type="PTM">
    <text evidence="1 6">Polyubiquitinated (PubMed:23166351). Agonist-induced ubiquitination leads to sort internalized receptors to the lysosomes for degradation (PubMed:23166351). Deubiquitination by USP20 and USP33, leads to ADRB2 recycling and resensitization after prolonged agonist stimulation. USP20 and USP33 are constitutively associated and are dissociated immediately after agonist stimulation. Ubiquitination by the VHL-E3 ligase complex is oxygen-dependent (By similarity).</text>
</comment>
<comment type="PTM">
    <text evidence="1">Hydroxylation by EGLN3 occurs only under normoxia and increases the interaction with VHL and the subsequent ubiquitination and degradation of ADRB2.</text>
</comment>
<comment type="PTM">
    <text evidence="2">Palmitoylated. Mainly palmitoylated at Cys-341. Palmitoylation may reduce accessibility of phosphorylation sites by anchoring the receptor to the plasma membrane. Agonist stimulation promotes depalmitoylation and further allows Ser-345 and Ser-346 phosphorylation. Also undergoes transient, ligand-induced palmitoylation at Cys-265 probably by ZDHHC9, ZDHHC14 and ZDHHC18 within the Golgi. Palmitoylation at Cys-265 requires phosphorylation by PKA and receptor internalization and stabilizes the receptor. Could be depalmitoylated by LYPLA1 at the plasma membrane.</text>
</comment>
<comment type="similarity">
    <text evidence="4">Belongs to the G-protein coupled receptor 1 family. Adrenergic receptor subfamily. ADRB2 sub-subfamily.</text>
</comment>
<reference key="1">
    <citation type="journal article" date="1987" name="Proc. Natl. Acad. Sci. U.S.A.">
        <title>Primary structure of rat cardiac beta-adrenergic and muscarinic cholinergic receptors obtained by automated DNA sequence analysis: further evidence for a multigene family.</title>
        <authorList>
            <person name="Gocayne J.D."/>
            <person name="Robinson D.A."/>
            <person name="Fitzgerald M.G."/>
            <person name="Chung F.-Z."/>
            <person name="Kerlavage A.R."/>
            <person name="Lentes K.-U."/>
            <person name="Lai J."/>
            <person name="Wang C.-D."/>
            <person name="Fraser C.M."/>
            <person name="Venter J.C."/>
        </authorList>
    </citation>
    <scope>NUCLEOTIDE SEQUENCE [MRNA]</scope>
</reference>
<reference key="2">
    <citation type="journal article" date="1990" name="Nucleic Acids Res.">
        <title>Primary structure of the rat beta-2 adrenergic receptor gene.</title>
        <authorList>
            <person name="Buckland P.R."/>
            <person name="Hill R.M."/>
            <person name="Tidmarsh S.F."/>
            <person name="McGuffin P."/>
        </authorList>
    </citation>
    <scope>NUCLEOTIDE SEQUENCE [GENOMIC DNA]</scope>
    <source>
        <tissue>Liver</tissue>
    </source>
</reference>
<reference key="3">
    <citation type="journal article" date="1995" name="Gene">
        <title>Sequence of the 5' regulatory domain of the gene encoding the rat beta 2-adrenergic receptor.</title>
        <authorList>
            <person name="Jiang L."/>
            <person name="Kunos G."/>
        </authorList>
    </citation>
    <scope>NUCLEOTIDE SEQUENCE [GENOMIC DNA]</scope>
    <source>
        <strain>Sprague-Dawley</strain>
    </source>
</reference>
<reference key="4">
    <citation type="journal article" date="1996" name="Biochim. Biophys. Acta">
        <title>Structural and functional analysis of the 5'-flanking region of the rat beta 2-adrenergic receptor gene.</title>
        <authorList>
            <person name="McGraw D.W."/>
            <person name="Jacobi S.E."/>
            <person name="Hiller F.C."/>
            <person name="Cornett L.E."/>
        </authorList>
    </citation>
    <scope>NUCLEOTIDE SEQUENCE [GENOMIC DNA] OF 1-23</scope>
</reference>
<reference key="5">
    <citation type="journal article" date="2012" name="J. Cell Biol.">
        <title>MARCH2 promotes endocytosis and lysosomal sorting of carvedilol-bound beta(2)-adrenergic receptors.</title>
        <authorList>
            <person name="Han S.O."/>
            <person name="Xiao K."/>
            <person name="Kim J."/>
            <person name="Wu J.H."/>
            <person name="Wisler J.W."/>
            <person name="Nakamura N."/>
            <person name="Freedman N.J."/>
            <person name="Shenoy S.K."/>
        </authorList>
    </citation>
    <scope>UBIQUITINATION</scope>
</reference>
<protein>
    <recommendedName>
        <fullName>Beta-2 adrenergic receptor</fullName>
    </recommendedName>
    <alternativeName>
        <fullName>Beta-2 adrenoreceptor</fullName>
        <shortName>Beta-2 adrenoceptor</shortName>
    </alternativeName>
</protein>
<organism>
    <name type="scientific">Rattus norvegicus</name>
    <name type="common">Rat</name>
    <dbReference type="NCBI Taxonomy" id="10116"/>
    <lineage>
        <taxon>Eukaryota</taxon>
        <taxon>Metazoa</taxon>
        <taxon>Chordata</taxon>
        <taxon>Craniata</taxon>
        <taxon>Vertebrata</taxon>
        <taxon>Euteleostomi</taxon>
        <taxon>Mammalia</taxon>
        <taxon>Eutheria</taxon>
        <taxon>Euarchontoglires</taxon>
        <taxon>Glires</taxon>
        <taxon>Rodentia</taxon>
        <taxon>Myomorpha</taxon>
        <taxon>Muroidea</taxon>
        <taxon>Muridae</taxon>
        <taxon>Murinae</taxon>
        <taxon>Rattus</taxon>
    </lineage>
</organism>
<name>ADRB2_RAT</name>
<proteinExistence type="evidence at protein level"/>
<evidence type="ECO:0000250" key="1"/>
<evidence type="ECO:0000250" key="2">
    <source>
        <dbReference type="UniProtKB" id="P07550"/>
    </source>
</evidence>
<evidence type="ECO:0000255" key="3"/>
<evidence type="ECO:0000255" key="4">
    <source>
        <dbReference type="PROSITE-ProRule" id="PRU00521"/>
    </source>
</evidence>
<evidence type="ECO:0000256" key="5">
    <source>
        <dbReference type="SAM" id="MobiDB-lite"/>
    </source>
</evidence>
<evidence type="ECO:0000269" key="6">
    <source>
    </source>
</evidence>
<evidence type="ECO:0000305" key="7"/>
<sequence length="418" mass="46891">MEPHGNDSDFLLAPNGSRAPGHDITQERDEAWVVGMAILMSVIVLAIVFGNVLVITAIAKFERLQTVTNYFITSLACADLVMGLAVVPFGASHILMKMWNFGNFWCEFWTSIDVLCVTASIETLCVIAVDRYVAITSPFKYQSLLTKNKARVVILMVWIVSGLTSFLPIQMHWYRATHKQAIDCYAKETCCDFFTNQAYAIASSIVSFYVPLVVMVFVYSRVFQVAKRQLQKIDKSEGRFHAQNLSQVEQDGRSGHGLRSSSKFCLKEHKALKTLGIIMGTFTLCWLPFFIVNIVHVIRANLIPKEVYILLNWLGYVNSAFNPLIYCRSPDFRIAFQELLCLRRSSSKTYGNGYSSNSNGRTDYTGEQSAYQLGQEKENELLCEEAPGMEGFVNCQGTVPSLSIDSQGRNCNTNDSPL</sequence>